<accession>Q60805</accession>
<accession>Q62194</accession>
<gene>
    <name type="primary">Mertk</name>
    <name type="synonym">Mer</name>
</gene>
<comment type="function">
    <text evidence="12 13">Receptor tyrosine kinase that transduces signals from the extracellular matrix into the cytoplasm by binding to several ligands including LGALS3, TUB, TULP1 or GAS6. Regulates many physiological processes including cell survival, migration, differentiation, and phagocytosis of apoptotic cells (efferocytosis). Ligand binding at the cell surface induces autophosphorylation of MERTK on its intracellular domain that provides docking sites for downstream signaling molecules. Following activation by ligand, interacts with GRB2 or PLCG2 and induces phosphorylation of MAPK1, MAPK2, FAK/PTK2 or RAC1. MERTK signaling plays a role in various processes such as macrophage clearance of apoptotic cells, platelet aggregation, cytoskeleton reorganization and engulfment. Functions in the retinal pigment epithelium (RPE) as a regulator of rod outer segments fragments phagocytosis. Also plays an important role in inhibition of Toll-like receptors (TLRs)-mediated innate immune response by activating STAT1, which selectively induces production of suppressors of cytokine signaling SOCS1 and SOCS3.</text>
</comment>
<comment type="catalytic activity">
    <reaction evidence="7">
        <text>L-tyrosyl-[protein] + ATP = O-phospho-L-tyrosyl-[protein] + ADP + H(+)</text>
        <dbReference type="Rhea" id="RHEA:10596"/>
        <dbReference type="Rhea" id="RHEA-COMP:10136"/>
        <dbReference type="Rhea" id="RHEA-COMP:20101"/>
        <dbReference type="ChEBI" id="CHEBI:15378"/>
        <dbReference type="ChEBI" id="CHEBI:30616"/>
        <dbReference type="ChEBI" id="CHEBI:46858"/>
        <dbReference type="ChEBI" id="CHEBI:61978"/>
        <dbReference type="ChEBI" id="CHEBI:456216"/>
        <dbReference type="EC" id="2.7.10.1"/>
    </reaction>
</comment>
<comment type="subunit">
    <text evidence="1">Interacts (upon activation) with TNK2; stimulates TNK2 autophosphorylation. Interacts (via N-terminus) with extracellular ligands LGALS3, TUB, TULP1 and GAS6. Interacts with VAV1 in a phosphotyrosine-independent manner. Interacts with TIMD4; this interaction enhances TIMD4-mediated efferocytosis (By similarity).</text>
</comment>
<comment type="subcellular location">
    <subcellularLocation>
        <location evidence="2">Cell membrane</location>
        <topology evidence="1">Single-pass type I membrane protein</topology>
    </subcellularLocation>
</comment>
<comment type="tissue specificity">
    <text evidence="10">Expressed predominantly in the hematopoietic lineages: macrophages, NK cells, NKT cells, dendritic cells and platelets.</text>
</comment>
<comment type="developmental stage">
    <text>Expressed during most, if not all, stages of embryological development beginning in the morula and blastocyst and progressing through the yolk sac and fetal liver stages.</text>
</comment>
<comment type="PTM">
    <text evidence="1 11">Autophosphorylated on Tyr-744, Tyr-748 and Tyr-749 in the activation loop allowing full activity (By similarity). Autophosphorylated on Tyr-867 leading to recruitment of downstream partners of the signaling cascade such as PLCG2.</text>
</comment>
<comment type="disruption phenotype">
    <text evidence="9">knockout mice are fertile, but male animals that lack all three receptors TYRO3, AXL and MERTK produce no mature sperm.</text>
</comment>
<comment type="similarity">
    <text evidence="5">Belongs to the protein kinase superfamily. Tyr protein kinase family. AXL/UFO subfamily.</text>
</comment>
<reference key="1">
    <citation type="journal article" date="1995" name="Oncogene">
        <title>Cloning and developmental expression analysis of the murine c-mer tyrosine kinase.</title>
        <authorList>
            <person name="Graham D.K."/>
            <person name="Bowman G.W."/>
            <person name="Dawson T.L."/>
            <person name="Stanford W.L."/>
            <person name="Earp H.S."/>
            <person name="Snodgrass H.R."/>
        </authorList>
    </citation>
    <scope>NUCLEOTIDE SEQUENCE [MRNA]</scope>
    <source>
        <strain>C57BL/6J</strain>
        <tissue>Spleen</tissue>
    </source>
</reference>
<reference key="2">
    <citation type="submission" date="1996-01" db="EMBL/GenBank/DDBJ databases">
        <title>A cDNA encoding part of a novel putative receptor tyrosine kinase.</title>
        <authorList>
            <person name="Dowds C.A."/>
            <person name="Burks D.J."/>
            <person name="Saling P.M."/>
        </authorList>
    </citation>
    <scope>NUCLEOTIDE SEQUENCE [MRNA] OF 472-994</scope>
    <source>
        <strain>CD-1</strain>
        <tissue>Testis</tissue>
    </source>
</reference>
<reference key="3">
    <citation type="journal article" date="1999" name="Nature">
        <title>Tyro-3 family receptors are essential regulators of mammalian spermatogenesis.</title>
        <authorList>
            <person name="Lu Q."/>
            <person name="Gore M."/>
            <person name="Zhang Q."/>
            <person name="Camenisch T."/>
            <person name="Boast S."/>
            <person name="Casagranda F."/>
            <person name="Lai C."/>
            <person name="Skinner M.K."/>
            <person name="Klein R."/>
            <person name="Matsushima G.K."/>
            <person name="Earp H.S."/>
            <person name="Goff S.P."/>
            <person name="Lemke G."/>
        </authorList>
    </citation>
    <scope>DISRUPTION PHENOTYPE</scope>
</reference>
<reference key="4">
    <citation type="journal article" date="1999" name="Mol. Cell. Biol.">
        <title>Biological effects of c-Mer receptor tyrosine kinase in hematopoietic cells depend on the Grb2 binding site in the receptor and activation of NF-kappaB.</title>
        <authorList>
            <person name="Georgescu M.M."/>
            <person name="Kirsch K.H."/>
            <person name="Shishido T."/>
            <person name="Zong C."/>
            <person name="Hanafusa H."/>
        </authorList>
    </citation>
    <scope>INTERACTION WITH GRB2</scope>
    <scope>MUTAGENESIS OF TYR-867</scope>
</reference>
<reference key="5">
    <citation type="journal article" date="2003" name="Eur. J. Immunol.">
        <title>The mer receptor tyrosine kinase: expression and function suggest a role in innate immunity.</title>
        <authorList>
            <person name="Behrens E.M."/>
            <person name="Gadue P."/>
            <person name="Gong S.Y."/>
            <person name="Garrett S."/>
            <person name="Stein P.L."/>
            <person name="Cohen P.L."/>
        </authorList>
    </citation>
    <scope>TISSUE SPECIFICITY</scope>
</reference>
<reference key="6">
    <citation type="journal article" date="2004" name="J. Leukoc. Biol.">
        <title>The receptor tyrosine kinase MerTK activates phospholipase C gamma2 during recognition of apoptotic thymocytes by murine macrophages.</title>
        <authorList>
            <person name="Todt J.C."/>
            <person name="Hu B."/>
            <person name="Curtis J.L."/>
        </authorList>
    </citation>
    <scope>INTERACTION WITH PLCG2</scope>
</reference>
<reference key="7">
    <citation type="journal article" date="2005" name="J. Cell Sci.">
        <title>A role for Mer tyrosine kinase in alphavbeta5 integrin-mediated phagocytosis of apoptotic cells.</title>
        <authorList>
            <person name="Wu Y."/>
            <person name="Singh S."/>
            <person name="Georgescu M.M."/>
            <person name="Birge R.B."/>
        </authorList>
    </citation>
    <scope>INTERACTION WITH FAK/PTK2</scope>
</reference>
<reference key="8">
    <citation type="journal article" date="2008" name="J. Biol. Chem.">
        <title>Autophosphorylation docking site Tyr-867 in Mer receptor tyrosine kinase allows for dissociation of multiple signaling pathways for phagocytosis of apoptotic cells and down-modulation of lipopolysaccharide-inducible NF-kappaB transcriptional activation.</title>
        <authorList>
            <person name="Tibrewal N."/>
            <person name="Wu Y."/>
            <person name="D'mello V."/>
            <person name="Akakura R."/>
            <person name="George T.C."/>
            <person name="Varnum B."/>
            <person name="Birge R.B."/>
        </authorList>
    </citation>
    <scope>PHOSPHORYLATION AT TYR-867</scope>
</reference>
<reference key="9">
    <citation type="journal article" date="2009" name="Invest. Ophthalmol. Vis. Sci.">
        <title>Mertk drives myosin II redistribution during retinal pigment epithelial phagocytosis.</title>
        <authorList>
            <person name="Strick D.J."/>
            <person name="Feng W."/>
            <person name="Vollrath D."/>
        </authorList>
    </citation>
    <scope>FUNCTION</scope>
</reference>
<reference key="10">
    <citation type="journal article" date="2010" name="Cell">
        <title>A tissue-specific atlas of mouse protein phosphorylation and expression.</title>
        <authorList>
            <person name="Huttlin E.L."/>
            <person name="Jedrychowski M.P."/>
            <person name="Elias J.E."/>
            <person name="Goswami T."/>
            <person name="Rad R."/>
            <person name="Beausoleil S.A."/>
            <person name="Villen J."/>
            <person name="Haas W."/>
            <person name="Sowa M.E."/>
            <person name="Gygi S.P."/>
        </authorList>
    </citation>
    <scope>IDENTIFICATION BY MASS SPECTROMETRY [LARGE SCALE ANALYSIS]</scope>
    <source>
        <tissue>Brain</tissue>
        <tissue>Kidney</tissue>
        <tissue>Lung</tissue>
        <tissue>Spleen</tissue>
        <tissue>Testis</tissue>
    </source>
</reference>
<reference key="11">
    <citation type="journal article" date="2010" name="EMBO J.">
        <title>Tubby and tubby-like protein 1 are new MerTK ligands for phagocytosis.</title>
        <authorList>
            <person name="Caberoy N.B."/>
            <person name="Zhou Y."/>
            <person name="Li W."/>
        </authorList>
    </citation>
    <scope>INTERACTION WITH TUB AND TULP1</scope>
</reference>
<reference key="12">
    <citation type="journal article" date="2010" name="Endocrinology">
        <title>Sertoli cell-initiated testicular innate immune response through toll-like receptor-3 activation is negatively regulated by Tyro3, Axl, and mer receptors.</title>
        <authorList>
            <person name="Sun B."/>
            <person name="Qi N."/>
            <person name="Shang T."/>
            <person name="Wu H."/>
            <person name="Deng T."/>
            <person name="Han D."/>
        </authorList>
    </citation>
    <scope>FUNCTION IN IMMUNE RESPONSE INHIBITION</scope>
</reference>
<reference key="13">
    <citation type="journal article" date="2012" name="J. Cell. Physiol.">
        <title>Galectin-3 is a new MerTK-specific eat-me signal.</title>
        <authorList>
            <person name="Caberoy N.B."/>
            <person name="Alvarado G."/>
            <person name="Bigcas J.L."/>
            <person name="Li W."/>
        </authorList>
    </citation>
    <scope>INTERACTION WITH LGALS3</scope>
</reference>
<organism>
    <name type="scientific">Mus musculus</name>
    <name type="common">Mouse</name>
    <dbReference type="NCBI Taxonomy" id="10090"/>
    <lineage>
        <taxon>Eukaryota</taxon>
        <taxon>Metazoa</taxon>
        <taxon>Chordata</taxon>
        <taxon>Craniata</taxon>
        <taxon>Vertebrata</taxon>
        <taxon>Euteleostomi</taxon>
        <taxon>Mammalia</taxon>
        <taxon>Eutheria</taxon>
        <taxon>Euarchontoglires</taxon>
        <taxon>Glires</taxon>
        <taxon>Rodentia</taxon>
        <taxon>Myomorpha</taxon>
        <taxon>Muroidea</taxon>
        <taxon>Muridae</taxon>
        <taxon>Murinae</taxon>
        <taxon>Mus</taxon>
        <taxon>Mus</taxon>
    </lineage>
</organism>
<keyword id="KW-0067">ATP-binding</keyword>
<keyword id="KW-1003">Cell membrane</keyword>
<keyword id="KW-1015">Disulfide bond</keyword>
<keyword id="KW-0325">Glycoprotein</keyword>
<keyword id="KW-0393">Immunoglobulin domain</keyword>
<keyword id="KW-0418">Kinase</keyword>
<keyword id="KW-0472">Membrane</keyword>
<keyword id="KW-0547">Nucleotide-binding</keyword>
<keyword id="KW-0597">Phosphoprotein</keyword>
<keyword id="KW-0656">Proto-oncogene</keyword>
<keyword id="KW-0675">Receptor</keyword>
<keyword id="KW-1185">Reference proteome</keyword>
<keyword id="KW-0677">Repeat</keyword>
<keyword id="KW-0732">Signal</keyword>
<keyword id="KW-0808">Transferase</keyword>
<keyword id="KW-0812">Transmembrane</keyword>
<keyword id="KW-1133">Transmembrane helix</keyword>
<keyword id="KW-0829">Tyrosine-protein kinase</keyword>
<protein>
    <recommendedName>
        <fullName>Tyrosine-protein kinase Mer</fullName>
        <ecNumber>2.7.10.1</ecNumber>
    </recommendedName>
    <alternativeName>
        <fullName>Proto-oncogene c-Mer</fullName>
    </alternativeName>
    <alternativeName>
        <fullName>Receptor tyrosine kinase MerTK</fullName>
    </alternativeName>
</protein>
<evidence type="ECO:0000250" key="1"/>
<evidence type="ECO:0000250" key="2">
    <source>
        <dbReference type="UniProtKB" id="Q12866"/>
    </source>
</evidence>
<evidence type="ECO:0000255" key="3"/>
<evidence type="ECO:0000255" key="4">
    <source>
        <dbReference type="PROSITE-ProRule" id="PRU00114"/>
    </source>
</evidence>
<evidence type="ECO:0000255" key="5">
    <source>
        <dbReference type="PROSITE-ProRule" id="PRU00159"/>
    </source>
</evidence>
<evidence type="ECO:0000255" key="6">
    <source>
        <dbReference type="PROSITE-ProRule" id="PRU00316"/>
    </source>
</evidence>
<evidence type="ECO:0000255" key="7">
    <source>
        <dbReference type="PROSITE-ProRule" id="PRU10028"/>
    </source>
</evidence>
<evidence type="ECO:0000256" key="8">
    <source>
        <dbReference type="SAM" id="MobiDB-lite"/>
    </source>
</evidence>
<evidence type="ECO:0000269" key="9">
    <source>
    </source>
</evidence>
<evidence type="ECO:0000269" key="10">
    <source>
    </source>
</evidence>
<evidence type="ECO:0000269" key="11">
    <source>
    </source>
</evidence>
<evidence type="ECO:0000269" key="12">
    <source>
    </source>
</evidence>
<evidence type="ECO:0000269" key="13">
    <source>
    </source>
</evidence>
<evidence type="ECO:0000269" key="14">
    <source>
    </source>
</evidence>
<evidence type="ECO:0000305" key="15"/>
<dbReference type="EC" id="2.7.10.1"/>
<dbReference type="EMBL" id="U21301">
    <property type="protein sequence ID" value="AAA80222.1"/>
    <property type="molecule type" value="mRNA"/>
</dbReference>
<dbReference type="EMBL" id="L11625">
    <property type="protein sequence ID" value="AAA85355.1"/>
    <property type="molecule type" value="mRNA"/>
</dbReference>
<dbReference type="CCDS" id="CCDS16716.1"/>
<dbReference type="PIR" id="I49276">
    <property type="entry name" value="I49276"/>
</dbReference>
<dbReference type="RefSeq" id="NP_032613.1">
    <property type="nucleotide sequence ID" value="NM_008587.3"/>
</dbReference>
<dbReference type="SMR" id="Q60805"/>
<dbReference type="BioGRID" id="201398">
    <property type="interactions" value="19"/>
</dbReference>
<dbReference type="FunCoup" id="Q60805">
    <property type="interactions" value="107"/>
</dbReference>
<dbReference type="IntAct" id="Q60805">
    <property type="interactions" value="1"/>
</dbReference>
<dbReference type="STRING" id="10090.ENSMUSP00000014505"/>
<dbReference type="BindingDB" id="Q60805"/>
<dbReference type="ChEMBL" id="CHEMBL4879469"/>
<dbReference type="GlyConnect" id="2804">
    <property type="glycosylation" value="6 N-Linked glycans (2 sites)"/>
</dbReference>
<dbReference type="GlyCosmos" id="Q60805">
    <property type="glycosylation" value="15 sites, 6 glycans"/>
</dbReference>
<dbReference type="GlyGen" id="Q60805">
    <property type="glycosylation" value="17 sites, 10 N-linked glycans (4 sites)"/>
</dbReference>
<dbReference type="iPTMnet" id="Q60805"/>
<dbReference type="PhosphoSitePlus" id="Q60805"/>
<dbReference type="CPTAC" id="non-CPTAC-3409"/>
<dbReference type="jPOST" id="Q60805"/>
<dbReference type="PaxDb" id="10090-ENSMUSP00000014505"/>
<dbReference type="PeptideAtlas" id="Q60805"/>
<dbReference type="ProteomicsDB" id="295928"/>
<dbReference type="Antibodypedia" id="33255">
    <property type="antibodies" value="893 antibodies from 43 providers"/>
</dbReference>
<dbReference type="DNASU" id="17289"/>
<dbReference type="Ensembl" id="ENSMUST00000014505.5">
    <property type="protein sequence ID" value="ENSMUSP00000014505.5"/>
    <property type="gene ID" value="ENSMUSG00000014361.6"/>
</dbReference>
<dbReference type="GeneID" id="17289"/>
<dbReference type="KEGG" id="mmu:17289"/>
<dbReference type="UCSC" id="uc008mgt.1">
    <property type="organism name" value="mouse"/>
</dbReference>
<dbReference type="AGR" id="MGI:96965"/>
<dbReference type="CTD" id="10461"/>
<dbReference type="MGI" id="MGI:96965">
    <property type="gene designation" value="Mertk"/>
</dbReference>
<dbReference type="VEuPathDB" id="HostDB:ENSMUSG00000014361"/>
<dbReference type="eggNOG" id="ENOG502QQQ3">
    <property type="taxonomic scope" value="Eukaryota"/>
</dbReference>
<dbReference type="GeneTree" id="ENSGT00940000155669"/>
<dbReference type="HOGENOM" id="CLU_015796_0_0_1"/>
<dbReference type="InParanoid" id="Q60805"/>
<dbReference type="OMA" id="QETRFGN"/>
<dbReference type="OrthoDB" id="4062651at2759"/>
<dbReference type="PhylomeDB" id="Q60805"/>
<dbReference type="TreeFam" id="TF317402"/>
<dbReference type="BRENDA" id="2.7.10.1">
    <property type="organism ID" value="3474"/>
</dbReference>
<dbReference type="Reactome" id="R-MMU-202733">
    <property type="pathway name" value="Cell surface interactions at the vascular wall"/>
</dbReference>
<dbReference type="BioGRID-ORCS" id="17289">
    <property type="hits" value="3 hits in 79 CRISPR screens"/>
</dbReference>
<dbReference type="PRO" id="PR:Q60805"/>
<dbReference type="Proteomes" id="UP000000589">
    <property type="component" value="Chromosome 2"/>
</dbReference>
<dbReference type="RNAct" id="Q60805">
    <property type="molecule type" value="protein"/>
</dbReference>
<dbReference type="Bgee" id="ENSMUSG00000014361">
    <property type="expression patterns" value="Expressed in stroma of bone marrow and 236 other cell types or tissues"/>
</dbReference>
<dbReference type="GO" id="GO:0005737">
    <property type="term" value="C:cytoplasm"/>
    <property type="evidence" value="ECO:0007669"/>
    <property type="project" value="Ensembl"/>
</dbReference>
<dbReference type="GO" id="GO:0005615">
    <property type="term" value="C:extracellular space"/>
    <property type="evidence" value="ECO:0007669"/>
    <property type="project" value="Ensembl"/>
</dbReference>
<dbReference type="GO" id="GO:0001750">
    <property type="term" value="C:photoreceptor outer segment"/>
    <property type="evidence" value="ECO:0007669"/>
    <property type="project" value="Ensembl"/>
</dbReference>
<dbReference type="GO" id="GO:0005886">
    <property type="term" value="C:plasma membrane"/>
    <property type="evidence" value="ECO:0007669"/>
    <property type="project" value="UniProtKB-SubCell"/>
</dbReference>
<dbReference type="GO" id="GO:0005524">
    <property type="term" value="F:ATP binding"/>
    <property type="evidence" value="ECO:0007669"/>
    <property type="project" value="UniProtKB-KW"/>
</dbReference>
<dbReference type="GO" id="GO:0004714">
    <property type="term" value="F:transmembrane receptor protein tyrosine kinase activity"/>
    <property type="evidence" value="ECO:0007669"/>
    <property type="project" value="UniProtKB-EC"/>
</dbReference>
<dbReference type="GO" id="GO:0043277">
    <property type="term" value="P:apoptotic cell clearance"/>
    <property type="evidence" value="ECO:0000314"/>
    <property type="project" value="MGI"/>
</dbReference>
<dbReference type="GO" id="GO:0051649">
    <property type="term" value="P:establishment of localization in cell"/>
    <property type="evidence" value="ECO:0000315"/>
    <property type="project" value="MGI"/>
</dbReference>
<dbReference type="GO" id="GO:0046649">
    <property type="term" value="P:lymphocyte activation"/>
    <property type="evidence" value="ECO:0000316"/>
    <property type="project" value="MGI"/>
</dbReference>
<dbReference type="GO" id="GO:0001779">
    <property type="term" value="P:natural killer cell differentiation"/>
    <property type="evidence" value="ECO:0000316"/>
    <property type="project" value="MGI"/>
</dbReference>
<dbReference type="GO" id="GO:0001818">
    <property type="term" value="P:negative regulation of cytokine production"/>
    <property type="evidence" value="ECO:0000316"/>
    <property type="project" value="MGI"/>
</dbReference>
<dbReference type="GO" id="GO:2000107">
    <property type="term" value="P:negative regulation of leukocyte apoptotic process"/>
    <property type="evidence" value="ECO:0007669"/>
    <property type="project" value="Ensembl"/>
</dbReference>
<dbReference type="GO" id="GO:0051250">
    <property type="term" value="P:negative regulation of lymphocyte activation"/>
    <property type="evidence" value="ECO:0000316"/>
    <property type="project" value="MGI"/>
</dbReference>
<dbReference type="GO" id="GO:0097350">
    <property type="term" value="P:neutrophil clearance"/>
    <property type="evidence" value="ECO:0000316"/>
    <property type="project" value="MGI"/>
</dbReference>
<dbReference type="GO" id="GO:0030168">
    <property type="term" value="P:platelet activation"/>
    <property type="evidence" value="ECO:0000315"/>
    <property type="project" value="MGI"/>
</dbReference>
<dbReference type="GO" id="GO:0050766">
    <property type="term" value="P:positive regulation of phagocytosis"/>
    <property type="evidence" value="ECO:0007669"/>
    <property type="project" value="Ensembl"/>
</dbReference>
<dbReference type="GO" id="GO:0051897">
    <property type="term" value="P:positive regulation of phosphatidylinositol 3-kinase/protein kinase B signal transduction"/>
    <property type="evidence" value="ECO:0000316"/>
    <property type="project" value="MGI"/>
</dbReference>
<dbReference type="GO" id="GO:0060041">
    <property type="term" value="P:retina development in camera-type eye"/>
    <property type="evidence" value="ECO:0000315"/>
    <property type="project" value="MGI"/>
</dbReference>
<dbReference type="GO" id="GO:0032940">
    <property type="term" value="P:secretion by cell"/>
    <property type="evidence" value="ECO:0000315"/>
    <property type="project" value="MGI"/>
</dbReference>
<dbReference type="GO" id="GO:0007283">
    <property type="term" value="P:spermatogenesis"/>
    <property type="evidence" value="ECO:0000316"/>
    <property type="project" value="MGI"/>
</dbReference>
<dbReference type="GO" id="GO:0034446">
    <property type="term" value="P:substrate adhesion-dependent cell spreading"/>
    <property type="evidence" value="ECO:0000315"/>
    <property type="project" value="MGI"/>
</dbReference>
<dbReference type="GO" id="GO:0060068">
    <property type="term" value="P:vagina development"/>
    <property type="evidence" value="ECO:0000316"/>
    <property type="project" value="MGI"/>
</dbReference>
<dbReference type="CDD" id="cd00063">
    <property type="entry name" value="FN3"/>
    <property type="match status" value="2"/>
</dbReference>
<dbReference type="CDD" id="cd05749">
    <property type="entry name" value="IgI_2_Axl_Tyro3_like"/>
    <property type="match status" value="1"/>
</dbReference>
<dbReference type="CDD" id="cd14204">
    <property type="entry name" value="PTKc_Mer"/>
    <property type="match status" value="1"/>
</dbReference>
<dbReference type="FunFam" id="2.60.40.10:FF:000902">
    <property type="entry name" value="MER proto-oncogene, tyrosine kinase"/>
    <property type="match status" value="1"/>
</dbReference>
<dbReference type="FunFam" id="2.60.40.10:FF:001050">
    <property type="entry name" value="MER proto-oncogene, tyrosine kinase"/>
    <property type="match status" value="1"/>
</dbReference>
<dbReference type="FunFam" id="2.60.40.10:FF:000834">
    <property type="entry name" value="Proto-oncogene tyrosine-protein kinase MER"/>
    <property type="match status" value="1"/>
</dbReference>
<dbReference type="FunFam" id="1.10.510.10:FF:000089">
    <property type="entry name" value="Tyrosine-protein kinase receptor TYRO3"/>
    <property type="match status" value="1"/>
</dbReference>
<dbReference type="FunFam" id="2.60.40.10:FF:000296">
    <property type="entry name" value="Tyrosine-protein kinase receptor TYRO3"/>
    <property type="match status" value="1"/>
</dbReference>
<dbReference type="FunFam" id="3.30.200.20:FF:000111">
    <property type="entry name" value="Tyrosine-protein kinase receptor TYRO3"/>
    <property type="match status" value="1"/>
</dbReference>
<dbReference type="Gene3D" id="2.60.40.10">
    <property type="entry name" value="Immunoglobulins"/>
    <property type="match status" value="4"/>
</dbReference>
<dbReference type="Gene3D" id="3.30.200.20">
    <property type="entry name" value="Phosphorylase Kinase, domain 1"/>
    <property type="match status" value="1"/>
</dbReference>
<dbReference type="Gene3D" id="1.10.510.10">
    <property type="entry name" value="Transferase(Phosphotransferase) domain 1"/>
    <property type="match status" value="1"/>
</dbReference>
<dbReference type="InterPro" id="IPR003961">
    <property type="entry name" value="FN3_dom"/>
</dbReference>
<dbReference type="InterPro" id="IPR036116">
    <property type="entry name" value="FN3_sf"/>
</dbReference>
<dbReference type="InterPro" id="IPR007110">
    <property type="entry name" value="Ig-like_dom"/>
</dbReference>
<dbReference type="InterPro" id="IPR036179">
    <property type="entry name" value="Ig-like_dom_sf"/>
</dbReference>
<dbReference type="InterPro" id="IPR013783">
    <property type="entry name" value="Ig-like_fold"/>
</dbReference>
<dbReference type="InterPro" id="IPR003599">
    <property type="entry name" value="Ig_sub"/>
</dbReference>
<dbReference type="InterPro" id="IPR013151">
    <property type="entry name" value="Immunoglobulin_dom"/>
</dbReference>
<dbReference type="InterPro" id="IPR011009">
    <property type="entry name" value="Kinase-like_dom_sf"/>
</dbReference>
<dbReference type="InterPro" id="IPR000719">
    <property type="entry name" value="Prot_kinase_dom"/>
</dbReference>
<dbReference type="InterPro" id="IPR017441">
    <property type="entry name" value="Protein_kinase_ATP_BS"/>
</dbReference>
<dbReference type="InterPro" id="IPR050122">
    <property type="entry name" value="RTK"/>
</dbReference>
<dbReference type="InterPro" id="IPR001245">
    <property type="entry name" value="Ser-Thr/Tyr_kinase_cat_dom"/>
</dbReference>
<dbReference type="InterPro" id="IPR008266">
    <property type="entry name" value="Tyr_kinase_AS"/>
</dbReference>
<dbReference type="InterPro" id="IPR020635">
    <property type="entry name" value="Tyr_kinase_cat_dom"/>
</dbReference>
<dbReference type="PANTHER" id="PTHR24416:SF257">
    <property type="entry name" value="TYROSINE-PROTEIN KINASE MER"/>
    <property type="match status" value="1"/>
</dbReference>
<dbReference type="PANTHER" id="PTHR24416">
    <property type="entry name" value="TYROSINE-PROTEIN KINASE RECEPTOR"/>
    <property type="match status" value="1"/>
</dbReference>
<dbReference type="Pfam" id="PF00041">
    <property type="entry name" value="fn3"/>
    <property type="match status" value="1"/>
</dbReference>
<dbReference type="Pfam" id="PF00047">
    <property type="entry name" value="ig"/>
    <property type="match status" value="1"/>
</dbReference>
<dbReference type="Pfam" id="PF13927">
    <property type="entry name" value="Ig_3"/>
    <property type="match status" value="1"/>
</dbReference>
<dbReference type="Pfam" id="PF07714">
    <property type="entry name" value="PK_Tyr_Ser-Thr"/>
    <property type="match status" value="1"/>
</dbReference>
<dbReference type="PRINTS" id="PR00109">
    <property type="entry name" value="TYRKINASE"/>
</dbReference>
<dbReference type="SMART" id="SM00060">
    <property type="entry name" value="FN3"/>
    <property type="match status" value="2"/>
</dbReference>
<dbReference type="SMART" id="SM00409">
    <property type="entry name" value="IG"/>
    <property type="match status" value="2"/>
</dbReference>
<dbReference type="SMART" id="SM00219">
    <property type="entry name" value="TyrKc"/>
    <property type="match status" value="1"/>
</dbReference>
<dbReference type="SUPFAM" id="SSF49265">
    <property type="entry name" value="Fibronectin type III"/>
    <property type="match status" value="1"/>
</dbReference>
<dbReference type="SUPFAM" id="SSF48726">
    <property type="entry name" value="Immunoglobulin"/>
    <property type="match status" value="2"/>
</dbReference>
<dbReference type="SUPFAM" id="SSF56112">
    <property type="entry name" value="Protein kinase-like (PK-like)"/>
    <property type="match status" value="1"/>
</dbReference>
<dbReference type="PROSITE" id="PS50853">
    <property type="entry name" value="FN3"/>
    <property type="match status" value="2"/>
</dbReference>
<dbReference type="PROSITE" id="PS50835">
    <property type="entry name" value="IG_LIKE"/>
    <property type="match status" value="2"/>
</dbReference>
<dbReference type="PROSITE" id="PS00107">
    <property type="entry name" value="PROTEIN_KINASE_ATP"/>
    <property type="match status" value="1"/>
</dbReference>
<dbReference type="PROSITE" id="PS50011">
    <property type="entry name" value="PROTEIN_KINASE_DOM"/>
    <property type="match status" value="1"/>
</dbReference>
<dbReference type="PROSITE" id="PS00109">
    <property type="entry name" value="PROTEIN_KINASE_TYR"/>
    <property type="match status" value="1"/>
</dbReference>
<feature type="signal peptide" evidence="3">
    <location>
        <begin position="1"/>
        <end position="18"/>
    </location>
</feature>
<feature type="chain" id="PRO_0000024444" description="Tyrosine-protein kinase Mer">
    <location>
        <begin position="19"/>
        <end position="994"/>
    </location>
</feature>
<feature type="topological domain" description="Extracellular" evidence="3">
    <location>
        <begin position="19"/>
        <end position="497"/>
    </location>
</feature>
<feature type="transmembrane region" description="Helical" evidence="3">
    <location>
        <begin position="498"/>
        <end position="518"/>
    </location>
</feature>
<feature type="topological domain" description="Cytoplasmic" evidence="3">
    <location>
        <begin position="519"/>
        <end position="994"/>
    </location>
</feature>
<feature type="domain" description="Ig-like C2-type 1">
    <location>
        <begin position="75"/>
        <end position="181"/>
    </location>
</feature>
<feature type="domain" description="Ig-like C2-type 2">
    <location>
        <begin position="192"/>
        <end position="268"/>
    </location>
</feature>
<feature type="domain" description="Fibronectin type-III 1" evidence="6">
    <location>
        <begin position="281"/>
        <end position="376"/>
    </location>
</feature>
<feature type="domain" description="Fibronectin type-III 2" evidence="6">
    <location>
        <begin position="381"/>
        <end position="478"/>
    </location>
</feature>
<feature type="domain" description="Protein kinase" evidence="5">
    <location>
        <begin position="582"/>
        <end position="852"/>
    </location>
</feature>
<feature type="region of interest" description="Disordered" evidence="8">
    <location>
        <begin position="44"/>
        <end position="78"/>
    </location>
</feature>
<feature type="active site" description="Proton acceptor" evidence="5 7">
    <location>
        <position position="718"/>
    </location>
</feature>
<feature type="binding site" evidence="5">
    <location>
        <begin position="588"/>
        <end position="596"/>
    </location>
    <ligand>
        <name>ATP</name>
        <dbReference type="ChEBI" id="CHEBI:30616"/>
    </ligand>
</feature>
<feature type="binding site" evidence="5">
    <location>
        <position position="610"/>
    </location>
    <ligand>
        <name>ATP</name>
        <dbReference type="ChEBI" id="CHEBI:30616"/>
    </ligand>
</feature>
<feature type="modified residue" description="Phosphoserine" evidence="2">
    <location>
        <position position="538"/>
    </location>
</feature>
<feature type="modified residue" description="Phosphotyrosine; by autocatalysis" evidence="2">
    <location>
        <position position="744"/>
    </location>
</feature>
<feature type="modified residue" description="Phosphotyrosine; by autocatalysis" evidence="2">
    <location>
        <position position="748"/>
    </location>
</feature>
<feature type="modified residue" description="Phosphotyrosine; by autocatalysis" evidence="2">
    <location>
        <position position="749"/>
    </location>
</feature>
<feature type="modified residue" description="Phosphotyrosine; by autocatalysis" evidence="11">
    <location>
        <position position="867"/>
    </location>
</feature>
<feature type="glycosylation site" description="N-linked (GlcNAc...) asparagine" evidence="3">
    <location>
        <position position="91"/>
    </location>
</feature>
<feature type="glycosylation site" description="N-linked (GlcNAc...) asparagine" evidence="3">
    <location>
        <position position="108"/>
    </location>
</feature>
<feature type="glycosylation site" description="N-linked (GlcNAc...) asparagine" evidence="3">
    <location>
        <position position="165"/>
    </location>
</feature>
<feature type="glycosylation site" description="N-linked (GlcNAc...) asparagine" evidence="3">
    <location>
        <position position="202"/>
    </location>
</feature>
<feature type="glycosylation site" description="N-linked (GlcNAc...) asparagine" evidence="3">
    <location>
        <position position="210"/>
    </location>
</feature>
<feature type="glycosylation site" description="N-linked (GlcNAc...) asparagine" evidence="3">
    <location>
        <position position="229"/>
    </location>
</feature>
<feature type="glycosylation site" description="N-linked (GlcNAc...) asparagine" evidence="3">
    <location>
        <position position="289"/>
    </location>
</feature>
<feature type="glycosylation site" description="N-linked (GlcNAc...) asparagine" evidence="3">
    <location>
        <position position="311"/>
    </location>
</feature>
<feature type="glycosylation site" description="N-linked (GlcNAc...) asparagine" evidence="3">
    <location>
        <position position="324"/>
    </location>
</feature>
<feature type="glycosylation site" description="N-linked (GlcNAc...) asparagine" evidence="3">
    <location>
        <position position="331"/>
    </location>
</feature>
<feature type="glycosylation site" description="N-linked (GlcNAc...) asparagine" evidence="3">
    <location>
        <position position="349"/>
    </location>
</feature>
<feature type="glycosylation site" description="N-linked (GlcNAc...) asparagine" evidence="3">
    <location>
        <position position="384"/>
    </location>
</feature>
<feature type="glycosylation site" description="N-linked (GlcNAc...) asparagine" evidence="3">
    <location>
        <position position="390"/>
    </location>
</feature>
<feature type="glycosylation site" description="N-linked (GlcNAc...) asparagine" evidence="3">
    <location>
        <position position="437"/>
    </location>
</feature>
<feature type="glycosylation site" description="N-linked (GlcNAc...) asparagine" evidence="3">
    <location>
        <position position="449"/>
    </location>
</feature>
<feature type="disulfide bond" evidence="4">
    <location>
        <begin position="109"/>
        <end position="170"/>
    </location>
</feature>
<feature type="disulfide bond" evidence="4">
    <location>
        <begin position="213"/>
        <end position="257"/>
    </location>
</feature>
<feature type="mutagenesis site" description="Loss of GRB2 binding." evidence="14">
    <original>Y</original>
    <variation>F</variation>
    <location>
        <position position="867"/>
    </location>
</feature>
<feature type="sequence conflict" description="In Ref. 2." evidence="15" ref="2">
    <original>IIIP</original>
    <variation>SARA</variation>
    <location>
        <begin position="473"/>
        <end position="476"/>
    </location>
</feature>
<feature type="sequence conflict" description="In Ref. 2; AAA85355." evidence="15" ref="2">
    <original>I</original>
    <variation>V</variation>
    <location>
        <position position="516"/>
    </location>
</feature>
<sequence length="994" mass="110157">MVLAPLLLGLLLLPALWSGGTAEKWEETELDQLFSGPLPGRLPVNHRPFSAPHSSRDQLPPPQTGRSHPAHTAAPQVTSTASKLLPPVAFNHTIGHIVLSEHKNVKFNCSINIPNTYQETAGISWWKDGKELLGAHHSITQFYPDEEGVSIIALFSIASVQRSDNGSYFCKMKVNNREIVSDPIYVEVQGLPYFIKQPESVNVTRNTAFNLTCQAVGPPEPVNIFWVQNSSRVNEKPERSPSVLTVPGLTETAVFSCEAHNDKGLTVSKGVHINIKVIPSPPTEVHILNSTAHSILVSWVPGFDGYSPLQNCSIQVKEADRLSNGSVMVFNTSASPHLYEIQQLQALANYSIAVSCRNEIGWSAVSPWILASTTEGAPSVAPLNITVFLNESNNILDIRWTKPPIKRQDGELVGYRISHVWESAGTYKELSEEVSQNGSWAQIPVQIHNATCTVRIAAITKGGIGPFSEPVNIIIPEHSKVDYAPSSTPAPGNTDSMFIILGCFCGFILIGLILCISLALRRRVQETKFGGAFSEEDSQLVVNYRAKKSFCRRAIELTLQSLGVSEELQNKLEDVVIDRNLLVLGKVLGEGEFGSVMEGNLKQEDGTSQKVAVKTMKLDNFSQREIEEFLSEAACMKDFNHPNVIRLLGVCIELSSQGIPKPMVILPFMKYGDLHTFLLYSRLNTGPKYIHLQTLLKFMMDIAQGMEYLSNRNFLHRDLAARNCMLRDDMTVCVADFGLSKKIYSGDYYRQGRIAKMPVKWIAIESLADRVYTSKSDVWAFGVTMWEITTRGMTPYPGVQNHEMYDYLLHGHRLKQPEDCLDELYDIMYSCWSADPLDRPTFSVLRLQLEKLSESLPDAQDKESIIYINTQLLESCEGIANGPSLTGLDMNIDPDSIIASCTPGAAVSVVTAEVHENNLREERYILNGGNEEWEDVSSTPFAAVTPEKDGVLPEDRLTKNGVSWSHHSTLPLGSPSPDELLFVDDSLEDSEVLM</sequence>
<proteinExistence type="evidence at protein level"/>
<name>MERTK_MOUSE</name>